<protein>
    <recommendedName>
        <fullName>Zinc metalloproteinase nas-36</fullName>
        <ecNumber evidence="2">3.4.24.-</ecNumber>
    </recommendedName>
    <alternativeName>
        <fullName>Nematode astacin 36</fullName>
    </alternativeName>
</protein>
<keyword id="KW-0165">Cleavage on pair of basic residues</keyword>
<keyword id="KW-0217">Developmental protein</keyword>
<keyword id="KW-1015">Disulfide bond</keyword>
<keyword id="KW-0245">EGF-like domain</keyword>
<keyword id="KW-0325">Glycoprotein</keyword>
<keyword id="KW-0378">Hydrolase</keyword>
<keyword id="KW-0479">Metal-binding</keyword>
<keyword id="KW-0482">Metalloprotease</keyword>
<keyword id="KW-0645">Protease</keyword>
<keyword id="KW-1185">Reference proteome</keyword>
<keyword id="KW-0964">Secreted</keyword>
<keyword id="KW-0732">Signal</keyword>
<keyword id="KW-0862">Zinc</keyword>
<keyword id="KW-0865">Zymogen</keyword>
<comment type="function">
    <text evidence="2 8">Metalloprotease (By similarity). Involved in molting, a process during larval stages in which a new cuticle is formed and the old cuticle is shed (PubMed:15255192).</text>
</comment>
<comment type="cofactor">
    <cofactor evidence="7">
        <name>Zn(2+)</name>
        <dbReference type="ChEBI" id="CHEBI:29105"/>
    </cofactor>
    <text evidence="7">Binds 1 zinc ion per subunit.</text>
</comment>
<comment type="subcellular location">
    <subcellularLocation>
        <location evidence="9">Secreted</location>
    </subcellularLocation>
</comment>
<comment type="tissue specificity">
    <text evidence="8">Expressed in hypodermal cells. Also detected in the hypodermal seam cells in L4 larvae and young adults. In old adult hermaphrodites, it localizes to the vulva (at protein level).</text>
</comment>
<comment type="disruption phenotype">
    <text evidence="8">Worms exhibit a trail of old cuticle that remains attached to the posterior part of the body.</text>
</comment>
<proteinExistence type="evidence at protein level"/>
<gene>
    <name type="primary">nas-36</name>
    <name type="ORF">C26C6.3</name>
</gene>
<sequence length="617" mass="69462">MRLCHSIILFNSLISISICSKADDPALLVASEFKEHFNVEEKQLETVEELLIKMKKLAHSRSFKGREFGHDAVEDSKKEVAISTQQGTINKKVSPFLFEGDIFLSRRQAVDILKALSKDKTKRLRRSFVSDKTATWKTMPIKYRFHESIDFYTISQIIAAIRFWEDSTCITFENVSDSPDGDYIEFFSGQGCYSMIGRNGGRQGISIGESCVKMGVIEHEIGHALGLWHEQSRPDALGYVTIERDFILPSYISDFLQRDDEIDTLGIPYDLGSVMHYGSTAFSVDQKSKTVVTRDSLYQQTIGQREKLSFYDVATINTAYCKDECKSEKTKCENGGYMRPSKCSECLCPDGLGGEKCEKNEDSKNAECGGIIKLTEEWKEIESPNYPDPGYEADQKCSWLLKAEKGKRVEIEFIEDFSFLCTSTCVDFVELKISDDLRNTGFRFCCYDKPEISFVSQTDTAIIIFRSQLSTDIGFKIQAKSTDAEPRTTIAPTIITTTLAPITVDAPNVWADWGEWSMCSRTCGGCGIRSRVRSCRSKKCEGRRQEFGTCNLKACPVDKHCAKLLSNNRLCNGKVCTKNDIAISSCDAPQCCPPFINVDGVCQSDQENQHDELWLSI</sequence>
<dbReference type="EC" id="3.4.24.-" evidence="2"/>
<dbReference type="EMBL" id="Z72503">
    <property type="protein sequence ID" value="CAA96596.2"/>
    <property type="molecule type" value="Genomic_DNA"/>
</dbReference>
<dbReference type="PIR" id="T19477">
    <property type="entry name" value="T19477"/>
</dbReference>
<dbReference type="RefSeq" id="NP_492109.2">
    <property type="nucleotide sequence ID" value="NM_059708.4"/>
</dbReference>
<dbReference type="SMR" id="Q18206"/>
<dbReference type="BioGRID" id="37948">
    <property type="interactions" value="9"/>
</dbReference>
<dbReference type="STRING" id="6239.C26C6.3.1"/>
<dbReference type="MEROPS" id="M12.319"/>
<dbReference type="GlyCosmos" id="Q18206">
    <property type="glycosylation" value="1 site, No reported glycans"/>
</dbReference>
<dbReference type="PaxDb" id="6239-C26C6.3"/>
<dbReference type="PeptideAtlas" id="Q18206"/>
<dbReference type="EnsemblMetazoa" id="C26C6.3.1">
    <property type="protein sequence ID" value="C26C6.3.1"/>
    <property type="gene ID" value="WBGene00003552"/>
</dbReference>
<dbReference type="GeneID" id="172506"/>
<dbReference type="KEGG" id="cel:CELE_C26C6.3"/>
<dbReference type="UCSC" id="C26C6.3">
    <property type="organism name" value="c. elegans"/>
</dbReference>
<dbReference type="AGR" id="WB:WBGene00003552"/>
<dbReference type="CTD" id="172506"/>
<dbReference type="WormBase" id="C26C6.3">
    <property type="protein sequence ID" value="CE38281"/>
    <property type="gene ID" value="WBGene00003552"/>
    <property type="gene designation" value="nas-36"/>
</dbReference>
<dbReference type="eggNOG" id="KOG3714">
    <property type="taxonomic scope" value="Eukaryota"/>
</dbReference>
<dbReference type="GeneTree" id="ENSGT00940000170755"/>
<dbReference type="HOGENOM" id="CLU_017286_1_3_1"/>
<dbReference type="InParanoid" id="Q18206"/>
<dbReference type="OMA" id="INEAYCK"/>
<dbReference type="OrthoDB" id="291007at2759"/>
<dbReference type="PhylomeDB" id="Q18206"/>
<dbReference type="PRO" id="PR:Q18206"/>
<dbReference type="Proteomes" id="UP000001940">
    <property type="component" value="Chromosome I"/>
</dbReference>
<dbReference type="Bgee" id="WBGene00003552">
    <property type="expression patterns" value="Expressed in pharyngeal muscle cell (C elegans) and 3 other cell types or tissues"/>
</dbReference>
<dbReference type="GO" id="GO:0005576">
    <property type="term" value="C:extracellular region"/>
    <property type="evidence" value="ECO:0007669"/>
    <property type="project" value="UniProtKB-SubCell"/>
</dbReference>
<dbReference type="GO" id="GO:0004222">
    <property type="term" value="F:metalloendopeptidase activity"/>
    <property type="evidence" value="ECO:0000318"/>
    <property type="project" value="GO_Central"/>
</dbReference>
<dbReference type="GO" id="GO:0008270">
    <property type="term" value="F:zinc ion binding"/>
    <property type="evidence" value="ECO:0007669"/>
    <property type="project" value="InterPro"/>
</dbReference>
<dbReference type="GO" id="GO:0018996">
    <property type="term" value="P:molting cycle, collagen and cuticulin-based cuticle"/>
    <property type="evidence" value="ECO:0000315"/>
    <property type="project" value="WormBase"/>
</dbReference>
<dbReference type="GO" id="GO:0006508">
    <property type="term" value="P:proteolysis"/>
    <property type="evidence" value="ECO:0007669"/>
    <property type="project" value="UniProtKB-KW"/>
</dbReference>
<dbReference type="CDD" id="cd00041">
    <property type="entry name" value="CUB"/>
    <property type="match status" value="1"/>
</dbReference>
<dbReference type="CDD" id="cd04280">
    <property type="entry name" value="ZnMc_astacin_like"/>
    <property type="match status" value="1"/>
</dbReference>
<dbReference type="FunFam" id="2.60.120.290:FF:000059">
    <property type="entry name" value="Zinc metalloproteinase"/>
    <property type="match status" value="1"/>
</dbReference>
<dbReference type="FunFam" id="3.40.390.10:FF:000028">
    <property type="entry name" value="Zinc metalloproteinase"/>
    <property type="match status" value="1"/>
</dbReference>
<dbReference type="Gene3D" id="3.40.390.10">
    <property type="entry name" value="Collagenase (Catalytic Domain)"/>
    <property type="match status" value="1"/>
</dbReference>
<dbReference type="Gene3D" id="2.60.120.290">
    <property type="entry name" value="Spermadhesin, CUB domain"/>
    <property type="match status" value="1"/>
</dbReference>
<dbReference type="Gene3D" id="2.20.100.10">
    <property type="entry name" value="Thrombospondin type-1 (TSP1) repeat"/>
    <property type="match status" value="1"/>
</dbReference>
<dbReference type="InterPro" id="IPR034035">
    <property type="entry name" value="Astacin-like_dom"/>
</dbReference>
<dbReference type="InterPro" id="IPR000859">
    <property type="entry name" value="CUB_dom"/>
</dbReference>
<dbReference type="InterPro" id="IPR024079">
    <property type="entry name" value="MetalloPept_cat_dom_sf"/>
</dbReference>
<dbReference type="InterPro" id="IPR017050">
    <property type="entry name" value="Metallopeptidase_nem"/>
</dbReference>
<dbReference type="InterPro" id="IPR001506">
    <property type="entry name" value="Peptidase_M12A"/>
</dbReference>
<dbReference type="InterPro" id="IPR006026">
    <property type="entry name" value="Peptidase_Metallo"/>
</dbReference>
<dbReference type="InterPro" id="IPR035914">
    <property type="entry name" value="Sperma_CUB_dom_sf"/>
</dbReference>
<dbReference type="InterPro" id="IPR000884">
    <property type="entry name" value="TSP1_rpt"/>
</dbReference>
<dbReference type="InterPro" id="IPR036383">
    <property type="entry name" value="TSP1_rpt_sf"/>
</dbReference>
<dbReference type="PANTHER" id="PTHR10127">
    <property type="entry name" value="DISCOIDIN, CUB, EGF, LAMININ , AND ZINC METALLOPROTEASE DOMAIN CONTAINING"/>
    <property type="match status" value="1"/>
</dbReference>
<dbReference type="PANTHER" id="PTHR10127:SF849">
    <property type="entry name" value="ZINC METALLOPROTEINASE NAS-36"/>
    <property type="match status" value="1"/>
</dbReference>
<dbReference type="Pfam" id="PF01400">
    <property type="entry name" value="Astacin"/>
    <property type="match status" value="1"/>
</dbReference>
<dbReference type="Pfam" id="PF00431">
    <property type="entry name" value="CUB"/>
    <property type="match status" value="1"/>
</dbReference>
<dbReference type="Pfam" id="PF00090">
    <property type="entry name" value="TSP_1"/>
    <property type="match status" value="1"/>
</dbReference>
<dbReference type="PIRSF" id="PIRSF036365">
    <property type="entry name" value="Astacin_nematoda"/>
    <property type="match status" value="1"/>
</dbReference>
<dbReference type="PRINTS" id="PR00480">
    <property type="entry name" value="ASTACIN"/>
</dbReference>
<dbReference type="SMART" id="SM00042">
    <property type="entry name" value="CUB"/>
    <property type="match status" value="1"/>
</dbReference>
<dbReference type="SMART" id="SM00209">
    <property type="entry name" value="TSP1"/>
    <property type="match status" value="1"/>
</dbReference>
<dbReference type="SMART" id="SM00235">
    <property type="entry name" value="ZnMc"/>
    <property type="match status" value="1"/>
</dbReference>
<dbReference type="SUPFAM" id="SSF55486">
    <property type="entry name" value="Metalloproteases ('zincins'), catalytic domain"/>
    <property type="match status" value="1"/>
</dbReference>
<dbReference type="SUPFAM" id="SSF49854">
    <property type="entry name" value="Spermadhesin, CUB domain"/>
    <property type="match status" value="1"/>
</dbReference>
<dbReference type="SUPFAM" id="SSF82895">
    <property type="entry name" value="TSP-1 type 1 repeat"/>
    <property type="match status" value="1"/>
</dbReference>
<dbReference type="PROSITE" id="PS51864">
    <property type="entry name" value="ASTACIN"/>
    <property type="match status" value="1"/>
</dbReference>
<dbReference type="PROSITE" id="PS01180">
    <property type="entry name" value="CUB"/>
    <property type="match status" value="1"/>
</dbReference>
<dbReference type="PROSITE" id="PS00022">
    <property type="entry name" value="EGF_1"/>
    <property type="match status" value="1"/>
</dbReference>
<dbReference type="PROSITE" id="PS50092">
    <property type="entry name" value="TSP1"/>
    <property type="match status" value="1"/>
</dbReference>
<dbReference type="PROSITE" id="PS00142">
    <property type="entry name" value="ZINC_PROTEASE"/>
    <property type="match status" value="1"/>
</dbReference>
<evidence type="ECO:0000250" key="1"/>
<evidence type="ECO:0000250" key="2">
    <source>
        <dbReference type="UniProtKB" id="D5FM38"/>
    </source>
</evidence>
<evidence type="ECO:0000250" key="3">
    <source>
        <dbReference type="UniProtKB" id="P13497"/>
    </source>
</evidence>
<evidence type="ECO:0000255" key="4"/>
<evidence type="ECO:0000255" key="5">
    <source>
        <dbReference type="PROSITE-ProRule" id="PRU00059"/>
    </source>
</evidence>
<evidence type="ECO:0000255" key="6">
    <source>
        <dbReference type="PROSITE-ProRule" id="PRU00210"/>
    </source>
</evidence>
<evidence type="ECO:0000255" key="7">
    <source>
        <dbReference type="PROSITE-ProRule" id="PRU01211"/>
    </source>
</evidence>
<evidence type="ECO:0000269" key="8">
    <source>
    </source>
</evidence>
<evidence type="ECO:0000305" key="9"/>
<name>NAS36_CAEEL</name>
<organism>
    <name type="scientific">Caenorhabditis elegans</name>
    <dbReference type="NCBI Taxonomy" id="6239"/>
    <lineage>
        <taxon>Eukaryota</taxon>
        <taxon>Metazoa</taxon>
        <taxon>Ecdysozoa</taxon>
        <taxon>Nematoda</taxon>
        <taxon>Chromadorea</taxon>
        <taxon>Rhabditida</taxon>
        <taxon>Rhabditina</taxon>
        <taxon>Rhabditomorpha</taxon>
        <taxon>Rhabditoidea</taxon>
        <taxon>Rhabditidae</taxon>
        <taxon>Peloderinae</taxon>
        <taxon>Caenorhabditis</taxon>
    </lineage>
</organism>
<feature type="signal peptide" evidence="4">
    <location>
        <begin position="1"/>
        <end position="22"/>
    </location>
</feature>
<feature type="propeptide" id="PRO_0000442249" evidence="3">
    <location>
        <begin position="23"/>
        <end position="126"/>
    </location>
</feature>
<feature type="chain" id="PRO_0000028940" description="Zinc metalloproteinase nas-36">
    <location>
        <begin position="127"/>
        <end position="617"/>
    </location>
</feature>
<feature type="domain" description="Peptidase M12A" evidence="7">
    <location>
        <begin position="127"/>
        <end position="322"/>
    </location>
</feature>
<feature type="domain" description="EGF-like">
    <location>
        <begin position="317"/>
        <end position="358"/>
    </location>
</feature>
<feature type="domain" description="CUB" evidence="5">
    <location>
        <begin position="368"/>
        <end position="482"/>
    </location>
</feature>
<feature type="domain" description="TSP type-1" evidence="6">
    <location>
        <begin position="507"/>
        <end position="556"/>
    </location>
</feature>
<feature type="active site" evidence="7">
    <location>
        <position position="220"/>
    </location>
</feature>
<feature type="binding site" evidence="7">
    <location>
        <position position="219"/>
    </location>
    <ligand>
        <name>Zn(2+)</name>
        <dbReference type="ChEBI" id="CHEBI:29105"/>
        <note>catalytic</note>
    </ligand>
</feature>
<feature type="binding site" evidence="7">
    <location>
        <position position="223"/>
    </location>
    <ligand>
        <name>Zn(2+)</name>
        <dbReference type="ChEBI" id="CHEBI:29105"/>
        <note>catalytic</note>
    </ligand>
</feature>
<feature type="binding site" evidence="7">
    <location>
        <position position="229"/>
    </location>
    <ligand>
        <name>Zn(2+)</name>
        <dbReference type="ChEBI" id="CHEBI:29105"/>
        <note>catalytic</note>
    </ligand>
</feature>
<feature type="glycosylation site" description="N-linked (GlcNAc...) asparagine" evidence="4">
    <location>
        <position position="174"/>
    </location>
</feature>
<feature type="disulfide bond" evidence="7">
    <location>
        <begin position="169"/>
        <end position="321"/>
    </location>
</feature>
<feature type="disulfide bond" evidence="7">
    <location>
        <begin position="192"/>
        <end position="211"/>
    </location>
</feature>
<feature type="disulfide bond" evidence="1">
    <location>
        <begin position="325"/>
        <end position="346"/>
    </location>
</feature>
<feature type="disulfide bond" evidence="1">
    <location>
        <begin position="348"/>
        <end position="357"/>
    </location>
</feature>
<feature type="disulfide bond" evidence="1">
    <location>
        <begin position="368"/>
        <end position="397"/>
    </location>
</feature>
<feature type="disulfide bond" evidence="1">
    <location>
        <begin position="425"/>
        <end position="445"/>
    </location>
</feature>
<feature type="disulfide bond" evidence="1">
    <location>
        <begin position="519"/>
        <end position="550"/>
    </location>
</feature>
<feature type="disulfide bond" evidence="1">
    <location>
        <begin position="523"/>
        <end position="555"/>
    </location>
</feature>
<feature type="disulfide bond" evidence="1">
    <location>
        <begin position="535"/>
        <end position="540"/>
    </location>
</feature>
<reference key="1">
    <citation type="journal article" date="1998" name="Science">
        <title>Genome sequence of the nematode C. elegans: a platform for investigating biology.</title>
        <authorList>
            <consortium name="The C. elegans sequencing consortium"/>
        </authorList>
    </citation>
    <scope>NUCLEOTIDE SEQUENCE [LARGE SCALE GENOMIC DNA]</scope>
    <source>
        <strain>Bristol N2</strain>
    </source>
</reference>
<reference key="2">
    <citation type="journal article" date="2003" name="Eur. J. Biochem.">
        <title>The astacin protein family in Caenorhabditis elegans.</title>
        <authorList>
            <person name="Moehrlen F."/>
            <person name="Hutter H."/>
            <person name="Zwilling R."/>
        </authorList>
    </citation>
    <scope>IDENTIFICATION</scope>
    <scope>NOMENCLATURE</scope>
</reference>
<reference key="3">
    <citation type="journal article" date="2004" name="Biol. Chem.">
        <title>Metalloproteases with EGF, CUB, and thrombospondin-1 domains function in molting of Caenorhabditis elegans.</title>
        <authorList>
            <person name="Suzuki M."/>
            <person name="Sagoh N."/>
            <person name="Iwasaki H."/>
            <person name="Inoue H."/>
            <person name="Takahashi K."/>
        </authorList>
    </citation>
    <scope>FUNCTION</scope>
    <scope>TISSUE SPECIFICITY</scope>
    <scope>DISRUPTION PHENOTYPE</scope>
</reference>
<accession>Q18206</accession>